<sequence>MNKVKCYVLFTALLSSLCAYGAPQSITELCSEYRNTQIYTINDKILSYTESMAGKREMVIITFKSGATFQVEVPGSQHIDSQKKAIERMKDTLRITYLTETKIDKLCVWNNKTPNSIAAISMEN</sequence>
<comment type="function">
    <text evidence="1">The biological activity of the toxin is produced by the A chain, which activates intracellular adenyl cyclase.</text>
</comment>
<comment type="subunit">
    <text evidence="1">Heterohexamer of one A chain and of five B chains.</text>
</comment>
<reference key="1">
    <citation type="journal article" date="1982" name="Mol. Gen. Genet.">
        <title>Overlapping genes in the heat-labile enterotoxin operon originating from Escherichia coli human strain.</title>
        <authorList>
            <person name="Yamamoto T."/>
            <person name="Tamura T.A."/>
            <person name="Yokota T."/>
            <person name="Takano T."/>
        </authorList>
    </citation>
    <scope>NUCLEOTIDE SEQUENCE [GENOMIC DNA]</scope>
    <source>
        <strain>H10407 / ETEC</strain>
    </source>
</reference>
<reference key="2">
    <citation type="journal article" date="1993" name="FEMS Microbiol. Lett.">
        <title>Amino acid sequence of heat-labile enterotoxin from chicken enterotoxigenic Escherichia coli is identical to that of human strain H 10407.</title>
        <authorList>
            <person name="Inoue T."/>
            <person name="Tsuji T."/>
            <person name="Koto M."/>
            <person name="Imamura S."/>
            <person name="Miyama A."/>
        </authorList>
    </citation>
    <scope>NUCLEOTIDE SEQUENCE [GENOMIC DNA]</scope>
    <source>
        <strain>H10407 / ETEC</strain>
    </source>
</reference>
<reference key="3">
    <citation type="journal article" date="2009" name="DNA Res.">
        <title>Nucleotide sequence analysis of the enterotoxigenic Escherichia coli Ent plasmid.</title>
        <authorList>
            <person name="Ochi S."/>
            <person name="Shimizu T."/>
            <person name="Ohtani K."/>
            <person name="Ichinose Y."/>
            <person name="Arimitsu H."/>
            <person name="Tsukamoto K."/>
            <person name="Kato M."/>
            <person name="Tsuji T."/>
        </authorList>
    </citation>
    <scope>NUCLEOTIDE SEQUENCE [LARGE SCALE GENOMIC DNA]</scope>
    <source>
        <strain>H10407 / ETEC</strain>
        <plasmid>pEntH10407</plasmid>
    </source>
</reference>
<reference key="4">
    <citation type="journal article" date="2010" name="J. Bacteriol.">
        <title>A commensal gone bad: complete genome sequence of the prototypical enterotoxigenic Escherichia coli strain H10407.</title>
        <authorList>
            <person name="Crossman L.C."/>
            <person name="Chaudhuri R.R."/>
            <person name="Beatson S.A."/>
            <person name="Wells T.J."/>
            <person name="Desvaux M."/>
            <person name="Cunningham A.F."/>
            <person name="Petty N.K."/>
            <person name="Mahon V."/>
            <person name="Brinkley C."/>
            <person name="Hobman J.L."/>
            <person name="Savarino S.J."/>
            <person name="Turner S.M."/>
            <person name="Pallen M.J."/>
            <person name="Penn C.W."/>
            <person name="Parkhill J."/>
            <person name="Turner A.K."/>
            <person name="Johnson T.J."/>
            <person name="Thomson N.R."/>
            <person name="Smith S.G."/>
            <person name="Henderson I.R."/>
        </authorList>
    </citation>
    <scope>NUCLEOTIDE SEQUENCE [LARGE SCALE GENOMIC DNA]</scope>
    <source>
        <strain>H10407 / ETEC</strain>
        <plasmid>p666</plasmid>
    </source>
</reference>
<organism>
    <name type="scientific">Escherichia coli O78:H11 (strain H10407 / ETEC)</name>
    <dbReference type="NCBI Taxonomy" id="316401"/>
    <lineage>
        <taxon>Bacteria</taxon>
        <taxon>Pseudomonadati</taxon>
        <taxon>Pseudomonadota</taxon>
        <taxon>Gammaproteobacteria</taxon>
        <taxon>Enterobacterales</taxon>
        <taxon>Enterobacteriaceae</taxon>
        <taxon>Escherichia</taxon>
    </lineage>
</organism>
<evidence type="ECO:0000250" key="1"/>
<name>ELBH_ECOH1</name>
<protein>
    <recommendedName>
        <fullName>Heat-labile enterotoxin B chain</fullName>
    </recommendedName>
    <alternativeName>
        <fullName>LT-B, human</fullName>
    </alternativeName>
    <alternativeName>
        <fullName>LTH-B</fullName>
    </alternativeName>
</protein>
<gene>
    <name type="primary">eltB</name>
    <name type="synonym">ltpB</name>
    <name type="ordered locus">ETEC_p666_0650</name>
</gene>
<geneLocation type="plasmid">
    <name>pEntH10407</name>
</geneLocation>
<geneLocation type="plasmid">
    <name>p666</name>
</geneLocation>
<feature type="signal peptide" evidence="1">
    <location>
        <begin position="1"/>
        <end position="21"/>
    </location>
</feature>
<feature type="chain" id="PRO_0000405304" description="Heat-labile enterotoxin B chain">
    <location>
        <begin position="22"/>
        <end position="124"/>
    </location>
</feature>
<feature type="disulfide bond" evidence="1">
    <location>
        <begin position="30"/>
        <end position="107"/>
    </location>
</feature>
<keyword id="KW-1015">Disulfide bond</keyword>
<keyword id="KW-0260">Enterotoxin</keyword>
<keyword id="KW-0614">Plasmid</keyword>
<keyword id="KW-0732">Signal</keyword>
<keyword id="KW-0800">Toxin</keyword>
<keyword id="KW-0843">Virulence</keyword>
<accession>D0Z6T1</accession>
<accession>P13811</accession>
<dbReference type="EMBL" id="J01646">
    <property type="protein sequence ID" value="AAB02982.1"/>
    <property type="molecule type" value="Genomic_DNA"/>
</dbReference>
<dbReference type="EMBL" id="S60731">
    <property type="protein sequence ID" value="AAC60441.1"/>
    <property type="molecule type" value="Genomic_DNA"/>
</dbReference>
<dbReference type="EMBL" id="AP010910">
    <property type="protein sequence ID" value="BAI49222.1"/>
    <property type="molecule type" value="Genomic_DNA"/>
</dbReference>
<dbReference type="EMBL" id="FN649417">
    <property type="protein sequence ID" value="CBJ04425.1"/>
    <property type="molecule type" value="Genomic_DNA"/>
</dbReference>
<dbReference type="PIR" id="A01820">
    <property type="entry name" value="QLECB"/>
</dbReference>
<dbReference type="RefSeq" id="WP_012846869.1">
    <property type="nucleotide sequence ID" value="NC_017722.1"/>
</dbReference>
<dbReference type="RefSeq" id="YP_003293996.1">
    <property type="nucleotide sequence ID" value="NC_013507.1"/>
</dbReference>
<dbReference type="SMR" id="D0Z6T1"/>
<dbReference type="TCDB" id="1.C.72.4.1">
    <property type="family name" value="the pertussis toxin (ptx) family"/>
</dbReference>
<dbReference type="KEGG" id="elh:ETEC_p666_0650"/>
<dbReference type="HOGENOM" id="CLU_2002942_0_0_6"/>
<dbReference type="GO" id="GO:0005576">
    <property type="term" value="C:extracellular region"/>
    <property type="evidence" value="ECO:0007669"/>
    <property type="project" value="InterPro"/>
</dbReference>
<dbReference type="GO" id="GO:0090729">
    <property type="term" value="F:toxin activity"/>
    <property type="evidence" value="ECO:0007669"/>
    <property type="project" value="UniProtKB-KW"/>
</dbReference>
<dbReference type="Gene3D" id="2.40.50.110">
    <property type="match status" value="1"/>
</dbReference>
<dbReference type="InterPro" id="IPR008992">
    <property type="entry name" value="Enterotoxin"/>
</dbReference>
<dbReference type="InterPro" id="IPR001835">
    <property type="entry name" value="Enterotoxin_B"/>
</dbReference>
<dbReference type="Pfam" id="PF01376">
    <property type="entry name" value="Enterotoxin_b"/>
    <property type="match status" value="1"/>
</dbReference>
<dbReference type="PRINTS" id="PR00772">
    <property type="entry name" value="ENTEROTOXINB"/>
</dbReference>
<dbReference type="SUPFAM" id="SSF50203">
    <property type="entry name" value="Bacterial enterotoxins"/>
    <property type="match status" value="1"/>
</dbReference>
<proteinExistence type="inferred from homology"/>